<gene>
    <name evidence="1" type="primary">atpB</name>
    <name type="ordered locus">M28_Spy0130</name>
</gene>
<proteinExistence type="inferred from homology"/>
<dbReference type="EMBL" id="CP000056">
    <property type="protein sequence ID" value="AAX71244.1"/>
    <property type="molecule type" value="Genomic_DNA"/>
</dbReference>
<dbReference type="RefSeq" id="WP_011284449.1">
    <property type="nucleotide sequence ID" value="NC_007296.2"/>
</dbReference>
<dbReference type="SMR" id="Q48VL2"/>
<dbReference type="KEGG" id="spb:M28_Spy0130"/>
<dbReference type="HOGENOM" id="CLU_022916_0_0_9"/>
<dbReference type="GO" id="GO:0005524">
    <property type="term" value="F:ATP binding"/>
    <property type="evidence" value="ECO:0007669"/>
    <property type="project" value="UniProtKB-UniRule"/>
</dbReference>
<dbReference type="GO" id="GO:0046933">
    <property type="term" value="F:proton-transporting ATP synthase activity, rotational mechanism"/>
    <property type="evidence" value="ECO:0007669"/>
    <property type="project" value="UniProtKB-UniRule"/>
</dbReference>
<dbReference type="GO" id="GO:0042777">
    <property type="term" value="P:proton motive force-driven plasma membrane ATP synthesis"/>
    <property type="evidence" value="ECO:0007669"/>
    <property type="project" value="UniProtKB-UniRule"/>
</dbReference>
<dbReference type="CDD" id="cd18112">
    <property type="entry name" value="ATP-synt_V_A-type_beta_C"/>
    <property type="match status" value="1"/>
</dbReference>
<dbReference type="CDD" id="cd18118">
    <property type="entry name" value="ATP-synt_V_A-type_beta_N"/>
    <property type="match status" value="1"/>
</dbReference>
<dbReference type="CDD" id="cd01135">
    <property type="entry name" value="V_A-ATPase_B"/>
    <property type="match status" value="1"/>
</dbReference>
<dbReference type="Gene3D" id="3.40.50.12240">
    <property type="match status" value="1"/>
</dbReference>
<dbReference type="HAMAP" id="MF_00310">
    <property type="entry name" value="ATP_synth_B_arch"/>
    <property type="match status" value="1"/>
</dbReference>
<dbReference type="InterPro" id="IPR055190">
    <property type="entry name" value="ATP-synt_VA_C"/>
</dbReference>
<dbReference type="InterPro" id="IPR020003">
    <property type="entry name" value="ATPase_a/bsu_AS"/>
</dbReference>
<dbReference type="InterPro" id="IPR004100">
    <property type="entry name" value="ATPase_F1/V1/A1_a/bsu_N"/>
</dbReference>
<dbReference type="InterPro" id="IPR000194">
    <property type="entry name" value="ATPase_F1/V1/A1_a/bsu_nucl-bd"/>
</dbReference>
<dbReference type="InterPro" id="IPR027417">
    <property type="entry name" value="P-loop_NTPase"/>
</dbReference>
<dbReference type="InterPro" id="IPR022879">
    <property type="entry name" value="V-ATPase_su_B/beta"/>
</dbReference>
<dbReference type="NCBIfam" id="NF003235">
    <property type="entry name" value="PRK04196.1"/>
    <property type="match status" value="1"/>
</dbReference>
<dbReference type="PANTHER" id="PTHR43389">
    <property type="entry name" value="V-TYPE PROTON ATPASE SUBUNIT B"/>
    <property type="match status" value="1"/>
</dbReference>
<dbReference type="PANTHER" id="PTHR43389:SF4">
    <property type="entry name" value="V-TYPE PROTON ATPASE SUBUNIT B"/>
    <property type="match status" value="1"/>
</dbReference>
<dbReference type="Pfam" id="PF00006">
    <property type="entry name" value="ATP-synt_ab"/>
    <property type="match status" value="1"/>
</dbReference>
<dbReference type="Pfam" id="PF02874">
    <property type="entry name" value="ATP-synt_ab_N"/>
    <property type="match status" value="1"/>
</dbReference>
<dbReference type="Pfam" id="PF22919">
    <property type="entry name" value="ATP-synt_VA_C"/>
    <property type="match status" value="1"/>
</dbReference>
<dbReference type="PIRSF" id="PIRSF039114">
    <property type="entry name" value="V-ATPsynth_beta/V-ATPase_B"/>
    <property type="match status" value="1"/>
</dbReference>
<dbReference type="SUPFAM" id="SSF52540">
    <property type="entry name" value="P-loop containing nucleoside triphosphate hydrolases"/>
    <property type="match status" value="1"/>
</dbReference>
<dbReference type="PROSITE" id="PS00152">
    <property type="entry name" value="ATPASE_ALPHA_BETA"/>
    <property type="match status" value="1"/>
</dbReference>
<reference key="1">
    <citation type="journal article" date="2005" name="J. Infect. Dis.">
        <title>Genome sequence of a serotype M28 strain of group A Streptococcus: potential new insights into puerperal sepsis and bacterial disease specificity.</title>
        <authorList>
            <person name="Green N.M."/>
            <person name="Zhang S."/>
            <person name="Porcella S.F."/>
            <person name="Nagiec M.J."/>
            <person name="Barbian K.D."/>
            <person name="Beres S.B."/>
            <person name="Lefebvre R.B."/>
            <person name="Musser J.M."/>
        </authorList>
    </citation>
    <scope>NUCLEOTIDE SEQUENCE [LARGE SCALE GENOMIC DNA]</scope>
    <source>
        <strain>MGAS6180</strain>
    </source>
</reference>
<feature type="chain" id="PRO_1000059395" description="V-type ATP synthase beta chain">
    <location>
        <begin position="1"/>
        <end position="471"/>
    </location>
</feature>
<accession>Q48VL2</accession>
<name>VATB_STRPM</name>
<evidence type="ECO:0000255" key="1">
    <source>
        <dbReference type="HAMAP-Rule" id="MF_00310"/>
    </source>
</evidence>
<comment type="function">
    <text evidence="1">Produces ATP from ADP in the presence of a proton gradient across the membrane. The V-type beta chain is a regulatory subunit.</text>
</comment>
<comment type="similarity">
    <text evidence="1">Belongs to the ATPase alpha/beta chains family.</text>
</comment>
<keyword id="KW-0066">ATP synthesis</keyword>
<keyword id="KW-0375">Hydrogen ion transport</keyword>
<keyword id="KW-0406">Ion transport</keyword>
<keyword id="KW-0813">Transport</keyword>
<organism>
    <name type="scientific">Streptococcus pyogenes serotype M28 (strain MGAS6180)</name>
    <dbReference type="NCBI Taxonomy" id="319701"/>
    <lineage>
        <taxon>Bacteria</taxon>
        <taxon>Bacillati</taxon>
        <taxon>Bacillota</taxon>
        <taxon>Bacilli</taxon>
        <taxon>Lactobacillales</taxon>
        <taxon>Streptococcaceae</taxon>
        <taxon>Streptococcus</taxon>
    </lineage>
</organism>
<sequence length="471" mass="52333">MSVLKEYRTVSEVVGPLMIVDQVAGVHYNELVDITLHNGERRKGQVLEVQGDKAMVQLFEGSTGINLAKTKVRFTGHPLELAVSEDMVGRIFDGMGHPIDGGPELIPEKYLDIDGQAINPVARDYPDEFIQTGISAIDHLNTLVRGQKLPVFSGSGLPHNELAAQIARQATVLNSDDNFAVVFAAMGITFEEAEFFMNDLRETGAIDRSVLFINLANDPAIERIATPRIALTTAEYLAYEKGMHVLVIMTDMTNYCEALREVSAARREVPGRRGYPGYLYTNLSTLYERAGRLIGKKGSVTQIPILTMPEDDITHPIPDLTGYITEGQIILSQELYKNGFRPPINVLPSLSRLKDKGSGEGKTRQDHAATMNQLFAAYAQGKQAKELAVVLGESALSETDKLYVAFTNRFEEEYINQGLYTNRSIEESLDLGWELLSILPRTELKRIKDDMLDRYLPKADTTMTKVFVAND</sequence>
<protein>
    <recommendedName>
        <fullName evidence="1">V-type ATP synthase beta chain</fullName>
    </recommendedName>
    <alternativeName>
        <fullName evidence="1">V-ATPase subunit B</fullName>
    </alternativeName>
</protein>